<evidence type="ECO:0000250" key="1">
    <source>
        <dbReference type="UniProtKB" id="Q7Z3Z0"/>
    </source>
</evidence>
<evidence type="ECO:0000250" key="2">
    <source>
        <dbReference type="UniProtKB" id="Q8VCW2"/>
    </source>
</evidence>
<evidence type="ECO:0000255" key="3"/>
<evidence type="ECO:0000255" key="4">
    <source>
        <dbReference type="PROSITE-ProRule" id="PRU01188"/>
    </source>
</evidence>
<evidence type="ECO:0000256" key="5">
    <source>
        <dbReference type="SAM" id="MobiDB-lite"/>
    </source>
</evidence>
<evidence type="ECO:0000305" key="6"/>
<evidence type="ECO:0000312" key="7">
    <source>
        <dbReference type="EMBL" id="BAF62405.1"/>
    </source>
</evidence>
<comment type="function">
    <text evidence="1 2">Essential for the proper assembly of type I and type II keratin protein complexes and formation of keratin intermediate filaments in the inner root sheath (irs) (By similarity). Plays a role in the cytoskeleton organization (By similarity).</text>
</comment>
<comment type="subunit">
    <text evidence="1 2 6">Heterodimer of a type I and a type II keratin. Heterodimer with type II keratin KRT5 leading to the formation of keratin intermediate filament (KIF) network. Interacts with KRT6A to form filaments.</text>
</comment>
<comment type="subcellular location">
    <subcellularLocation>
        <location evidence="2">Cytoplasm</location>
    </subcellularLocation>
</comment>
<comment type="miscellaneous">
    <text evidence="6">There are two types of cytoskeletal and microfibrillar keratin: I (acidic; 40-55 kDa) and II (neutral to basic; 56-70 kDa).</text>
</comment>
<comment type="similarity">
    <text evidence="4">Belongs to the intermediate filament family.</text>
</comment>
<sequence>MSLRLSSASRRSCPRPTTGSLRLSGGGTSFGTGNSCGISGIGSGFSCAFGGSSLGGNTAGGNPCAGFTVNERGLLSGNEKVTMQNLNDRLASYLDSVHALEEANADLEQKIKGWYEKFGPGSCRGLDHDYSRYFPIIDDLKNQIIASTTSNANAVLQIDNARLTADDFRLKYENELALHQSVEADVNGLRRVLDEITLCRTDLEIQYETLSEEMTYLKKNHKEEMQVLQCAAGGNVNVEMNAAPGVDLTVLLNNMRAEYEALAEQNRRDAEAWFNEKSASLQQQISEDVGATTSARNELTEMKRTLQTLEIELQSLLATKHSLECSLTETESNYCAQLAQIQAQIGALEEQLHQVRTETEGQKLEYEQLLDIKLHLEKEIETYCLLIGGDDGACKSGGYKSKDYGSGNVGSQVKDSAKAIVVKKVLEEVDQRSKILTTRLRSLEEKSQSN</sequence>
<accession>A5A6N2</accession>
<gene>
    <name type="primary">KRT25</name>
    <name type="synonym">KRT25A</name>
</gene>
<feature type="chain" id="PRO_0000312693" description="Keratin, type I cytoskeletal 25">
    <location>
        <begin position="1"/>
        <end position="450"/>
    </location>
</feature>
<feature type="domain" description="IF rod" evidence="4">
    <location>
        <begin position="79"/>
        <end position="394"/>
    </location>
</feature>
<feature type="region of interest" description="Head" evidence="3">
    <location>
        <begin position="1"/>
        <end position="78"/>
    </location>
</feature>
<feature type="region of interest" description="Disordered" evidence="5">
    <location>
        <begin position="1"/>
        <end position="26"/>
    </location>
</feature>
<feature type="region of interest" description="Coil 1A" evidence="3">
    <location>
        <begin position="79"/>
        <end position="114"/>
    </location>
</feature>
<feature type="region of interest" description="Linker 1" evidence="3">
    <location>
        <begin position="115"/>
        <end position="136"/>
    </location>
</feature>
<feature type="region of interest" description="Coil 1B" evidence="3">
    <location>
        <begin position="137"/>
        <end position="228"/>
    </location>
</feature>
<feature type="region of interest" description="Linker 12" evidence="3">
    <location>
        <begin position="229"/>
        <end position="251"/>
    </location>
</feature>
<feature type="region of interest" description="Coil 2" evidence="3">
    <location>
        <begin position="252"/>
        <end position="390"/>
    </location>
</feature>
<feature type="region of interest" description="Tail" evidence="3">
    <location>
        <begin position="391"/>
        <end position="450"/>
    </location>
</feature>
<feature type="compositionally biased region" description="Low complexity" evidence="5">
    <location>
        <begin position="1"/>
        <end position="23"/>
    </location>
</feature>
<feature type="modified residue" description="Phosphoserine" evidence="1">
    <location>
        <position position="442"/>
    </location>
</feature>
<proteinExistence type="evidence at transcript level"/>
<name>K1C25_PANTR</name>
<protein>
    <recommendedName>
        <fullName>Keratin, type I cytoskeletal 25</fullName>
    </recommendedName>
    <alternativeName>
        <fullName>Cytokeratin-25</fullName>
        <shortName>CK-25</shortName>
    </alternativeName>
    <alternativeName>
        <fullName>Keratin-25</fullName>
        <shortName>K25</shortName>
    </alternativeName>
    <alternativeName>
        <fullName>Keratin-25A</fullName>
        <shortName>K25A</shortName>
    </alternativeName>
    <alternativeName>
        <fullName>Type I inner root sheath-specific keratin-K25irs1</fullName>
    </alternativeName>
</protein>
<dbReference type="EMBL" id="AB222160">
    <property type="protein sequence ID" value="BAF62405.1"/>
    <property type="molecule type" value="mRNA"/>
</dbReference>
<dbReference type="RefSeq" id="NP_001092033.1">
    <property type="nucleotide sequence ID" value="NM_001098563.1"/>
</dbReference>
<dbReference type="SMR" id="A5A6N2"/>
<dbReference type="FunCoup" id="A5A6N2">
    <property type="interactions" value="145"/>
</dbReference>
<dbReference type="STRING" id="9598.ENSPTRP00000015562"/>
<dbReference type="PaxDb" id="9598-ENSPTRP00000015562"/>
<dbReference type="GeneID" id="468237"/>
<dbReference type="KEGG" id="ptr:468237"/>
<dbReference type="CTD" id="147183"/>
<dbReference type="eggNOG" id="ENOG502SKJN">
    <property type="taxonomic scope" value="Eukaryota"/>
</dbReference>
<dbReference type="InParanoid" id="A5A6N2"/>
<dbReference type="OrthoDB" id="13484at9604"/>
<dbReference type="Proteomes" id="UP000002277">
    <property type="component" value="Unplaced"/>
</dbReference>
<dbReference type="GO" id="GO:0005737">
    <property type="term" value="C:cytoplasm"/>
    <property type="evidence" value="ECO:0007669"/>
    <property type="project" value="UniProtKB-SubCell"/>
</dbReference>
<dbReference type="GO" id="GO:0005856">
    <property type="term" value="C:cytoskeleton"/>
    <property type="evidence" value="ECO:0000318"/>
    <property type="project" value="GO_Central"/>
</dbReference>
<dbReference type="GO" id="GO:0005882">
    <property type="term" value="C:intermediate filament"/>
    <property type="evidence" value="ECO:0007669"/>
    <property type="project" value="UniProtKB-KW"/>
</dbReference>
<dbReference type="GO" id="GO:0046982">
    <property type="term" value="F:protein heterodimerization activity"/>
    <property type="evidence" value="ECO:0000250"/>
    <property type="project" value="UniProtKB"/>
</dbReference>
<dbReference type="GO" id="GO:0005198">
    <property type="term" value="F:structural molecule activity"/>
    <property type="evidence" value="ECO:0007669"/>
    <property type="project" value="InterPro"/>
</dbReference>
<dbReference type="GO" id="GO:0007010">
    <property type="term" value="P:cytoskeleton organization"/>
    <property type="evidence" value="ECO:0000250"/>
    <property type="project" value="UniProtKB"/>
</dbReference>
<dbReference type="GO" id="GO:0030855">
    <property type="term" value="P:epithelial cell differentiation"/>
    <property type="evidence" value="ECO:0000318"/>
    <property type="project" value="GO_Central"/>
</dbReference>
<dbReference type="GO" id="GO:0031069">
    <property type="term" value="P:hair follicle morphogenesis"/>
    <property type="evidence" value="ECO:0000318"/>
    <property type="project" value="GO_Central"/>
</dbReference>
<dbReference type="GO" id="GO:0045109">
    <property type="term" value="P:intermediate filament organization"/>
    <property type="evidence" value="ECO:0000318"/>
    <property type="project" value="GO_Central"/>
</dbReference>
<dbReference type="FunFam" id="1.20.5.1160:FF:000002">
    <property type="entry name" value="Type I keratin 10"/>
    <property type="match status" value="1"/>
</dbReference>
<dbReference type="FunFam" id="1.20.5.170:FF:000002">
    <property type="entry name" value="Type I keratin KA11"/>
    <property type="match status" value="1"/>
</dbReference>
<dbReference type="FunFam" id="1.20.5.500:FF:000001">
    <property type="entry name" value="Type II keratin 23"/>
    <property type="match status" value="1"/>
</dbReference>
<dbReference type="Gene3D" id="1.20.5.170">
    <property type="match status" value="1"/>
</dbReference>
<dbReference type="Gene3D" id="1.20.5.500">
    <property type="entry name" value="Single helix bin"/>
    <property type="match status" value="1"/>
</dbReference>
<dbReference type="Gene3D" id="1.20.5.1160">
    <property type="entry name" value="Vasodilator-stimulated phosphoprotein"/>
    <property type="match status" value="1"/>
</dbReference>
<dbReference type="InterPro" id="IPR039008">
    <property type="entry name" value="IF_rod_dom"/>
</dbReference>
<dbReference type="InterPro" id="IPR002957">
    <property type="entry name" value="Keratin_I"/>
</dbReference>
<dbReference type="PANTHER" id="PTHR23239">
    <property type="entry name" value="INTERMEDIATE FILAMENT"/>
    <property type="match status" value="1"/>
</dbReference>
<dbReference type="PANTHER" id="PTHR23239:SF160">
    <property type="entry name" value="KERATIN, TYPE I CYTOSKELETAL 25"/>
    <property type="match status" value="1"/>
</dbReference>
<dbReference type="Pfam" id="PF00038">
    <property type="entry name" value="Filament"/>
    <property type="match status" value="1"/>
</dbReference>
<dbReference type="PRINTS" id="PR01248">
    <property type="entry name" value="TYPE1KERATIN"/>
</dbReference>
<dbReference type="SMART" id="SM01391">
    <property type="entry name" value="Filament"/>
    <property type="match status" value="1"/>
</dbReference>
<dbReference type="SUPFAM" id="SSF64593">
    <property type="entry name" value="Intermediate filament protein, coiled coil region"/>
    <property type="match status" value="2"/>
</dbReference>
<dbReference type="PROSITE" id="PS51842">
    <property type="entry name" value="IF_ROD_2"/>
    <property type="match status" value="1"/>
</dbReference>
<organism>
    <name type="scientific">Pan troglodytes</name>
    <name type="common">Chimpanzee</name>
    <dbReference type="NCBI Taxonomy" id="9598"/>
    <lineage>
        <taxon>Eukaryota</taxon>
        <taxon>Metazoa</taxon>
        <taxon>Chordata</taxon>
        <taxon>Craniata</taxon>
        <taxon>Vertebrata</taxon>
        <taxon>Euteleostomi</taxon>
        <taxon>Mammalia</taxon>
        <taxon>Eutheria</taxon>
        <taxon>Euarchontoglires</taxon>
        <taxon>Primates</taxon>
        <taxon>Haplorrhini</taxon>
        <taxon>Catarrhini</taxon>
        <taxon>Hominidae</taxon>
        <taxon>Pan</taxon>
    </lineage>
</organism>
<reference evidence="7" key="1">
    <citation type="journal article" date="2007" name="Gene">
        <title>Mapping of chimpanzee full-length cDNAs onto the human genome unveils large potential divergence of the transcriptome.</title>
        <authorList>
            <person name="Sakate R."/>
            <person name="Suto Y."/>
            <person name="Imanishi T."/>
            <person name="Tanoue T."/>
            <person name="Hida M."/>
            <person name="Hayasaka I."/>
            <person name="Kusuda J."/>
            <person name="Gojobori T."/>
            <person name="Hashimoto K."/>
            <person name="Hirai M."/>
        </authorList>
    </citation>
    <scope>NUCLEOTIDE SEQUENCE [MRNA]</scope>
    <source>
        <tissue evidence="7">Skin</tissue>
    </source>
</reference>
<keyword id="KW-0175">Coiled coil</keyword>
<keyword id="KW-0963">Cytoplasm</keyword>
<keyword id="KW-0403">Intermediate filament</keyword>
<keyword id="KW-0416">Keratin</keyword>
<keyword id="KW-0597">Phosphoprotein</keyword>
<keyword id="KW-1185">Reference proteome</keyword>